<comment type="function">
    <text evidence="1">Involved in the biosynthesis of branched-chain amino acids (BCAA). Catalyzes an alkyl-migration followed by a ketol-acid reduction of (S)-2-acetolactate (S2AL) to yield (R)-2,3-dihydroxy-isovalerate. In the isomerase reaction, S2AL is rearranged via a Mg-dependent methyl migration to produce 3-hydroxy-3-methyl-2-ketobutyrate (HMKB). In the reductase reaction, this 2-ketoacid undergoes a metal-dependent reduction by NADPH to yield (R)-2,3-dihydroxy-isovalerate.</text>
</comment>
<comment type="catalytic activity">
    <reaction evidence="1">
        <text>(2R)-2,3-dihydroxy-3-methylbutanoate + NADP(+) = (2S)-2-acetolactate + NADPH + H(+)</text>
        <dbReference type="Rhea" id="RHEA:22068"/>
        <dbReference type="ChEBI" id="CHEBI:15378"/>
        <dbReference type="ChEBI" id="CHEBI:49072"/>
        <dbReference type="ChEBI" id="CHEBI:57783"/>
        <dbReference type="ChEBI" id="CHEBI:58349"/>
        <dbReference type="ChEBI" id="CHEBI:58476"/>
        <dbReference type="EC" id="1.1.1.86"/>
    </reaction>
</comment>
<comment type="catalytic activity">
    <reaction evidence="1">
        <text>(2R,3R)-2,3-dihydroxy-3-methylpentanoate + NADP(+) = (S)-2-ethyl-2-hydroxy-3-oxobutanoate + NADPH + H(+)</text>
        <dbReference type="Rhea" id="RHEA:13493"/>
        <dbReference type="ChEBI" id="CHEBI:15378"/>
        <dbReference type="ChEBI" id="CHEBI:49256"/>
        <dbReference type="ChEBI" id="CHEBI:49258"/>
        <dbReference type="ChEBI" id="CHEBI:57783"/>
        <dbReference type="ChEBI" id="CHEBI:58349"/>
        <dbReference type="EC" id="1.1.1.86"/>
    </reaction>
</comment>
<comment type="cofactor">
    <cofactor evidence="1">
        <name>Mg(2+)</name>
        <dbReference type="ChEBI" id="CHEBI:18420"/>
    </cofactor>
    <text evidence="1">Binds 2 magnesium ions per subunit.</text>
</comment>
<comment type="pathway">
    <text evidence="1">Amino-acid biosynthesis; L-isoleucine biosynthesis; L-isoleucine from 2-oxobutanoate: step 2/4.</text>
</comment>
<comment type="pathway">
    <text evidence="1">Amino-acid biosynthesis; L-valine biosynthesis; L-valine from pyruvate: step 2/4.</text>
</comment>
<comment type="similarity">
    <text evidence="1">Belongs to the ketol-acid reductoisomerase family.</text>
</comment>
<dbReference type="EC" id="1.1.1.86" evidence="1"/>
<dbReference type="EMBL" id="BX569693">
    <property type="protein sequence ID" value="CAE08165.1"/>
    <property type="molecule type" value="Genomic_DNA"/>
</dbReference>
<dbReference type="RefSeq" id="WP_011128514.1">
    <property type="nucleotide sequence ID" value="NC_005070.1"/>
</dbReference>
<dbReference type="SMR" id="Q7U5Q1"/>
<dbReference type="STRING" id="84588.SYNW1650"/>
<dbReference type="KEGG" id="syw:SYNW1650"/>
<dbReference type="eggNOG" id="COG0059">
    <property type="taxonomic scope" value="Bacteria"/>
</dbReference>
<dbReference type="HOGENOM" id="CLU_033821_0_1_3"/>
<dbReference type="UniPathway" id="UPA00047">
    <property type="reaction ID" value="UER00056"/>
</dbReference>
<dbReference type="UniPathway" id="UPA00049">
    <property type="reaction ID" value="UER00060"/>
</dbReference>
<dbReference type="Proteomes" id="UP000001422">
    <property type="component" value="Chromosome"/>
</dbReference>
<dbReference type="GO" id="GO:0005829">
    <property type="term" value="C:cytosol"/>
    <property type="evidence" value="ECO:0007669"/>
    <property type="project" value="TreeGrafter"/>
</dbReference>
<dbReference type="GO" id="GO:0004455">
    <property type="term" value="F:ketol-acid reductoisomerase activity"/>
    <property type="evidence" value="ECO:0007669"/>
    <property type="project" value="UniProtKB-UniRule"/>
</dbReference>
<dbReference type="GO" id="GO:0000287">
    <property type="term" value="F:magnesium ion binding"/>
    <property type="evidence" value="ECO:0007669"/>
    <property type="project" value="UniProtKB-UniRule"/>
</dbReference>
<dbReference type="GO" id="GO:0050661">
    <property type="term" value="F:NADP binding"/>
    <property type="evidence" value="ECO:0007669"/>
    <property type="project" value="InterPro"/>
</dbReference>
<dbReference type="GO" id="GO:0009097">
    <property type="term" value="P:isoleucine biosynthetic process"/>
    <property type="evidence" value="ECO:0007669"/>
    <property type="project" value="UniProtKB-UniRule"/>
</dbReference>
<dbReference type="GO" id="GO:0009099">
    <property type="term" value="P:L-valine biosynthetic process"/>
    <property type="evidence" value="ECO:0007669"/>
    <property type="project" value="UniProtKB-UniRule"/>
</dbReference>
<dbReference type="FunFam" id="3.40.50.720:FF:000023">
    <property type="entry name" value="Ketol-acid reductoisomerase (NADP(+))"/>
    <property type="match status" value="1"/>
</dbReference>
<dbReference type="Gene3D" id="6.10.240.10">
    <property type="match status" value="1"/>
</dbReference>
<dbReference type="Gene3D" id="3.40.50.720">
    <property type="entry name" value="NAD(P)-binding Rossmann-like Domain"/>
    <property type="match status" value="1"/>
</dbReference>
<dbReference type="HAMAP" id="MF_00435">
    <property type="entry name" value="IlvC"/>
    <property type="match status" value="1"/>
</dbReference>
<dbReference type="InterPro" id="IPR008927">
    <property type="entry name" value="6-PGluconate_DH-like_C_sf"/>
</dbReference>
<dbReference type="InterPro" id="IPR013023">
    <property type="entry name" value="KARI"/>
</dbReference>
<dbReference type="InterPro" id="IPR000506">
    <property type="entry name" value="KARI_C"/>
</dbReference>
<dbReference type="InterPro" id="IPR013116">
    <property type="entry name" value="KARI_N"/>
</dbReference>
<dbReference type="InterPro" id="IPR014359">
    <property type="entry name" value="KARI_prok"/>
</dbReference>
<dbReference type="InterPro" id="IPR036291">
    <property type="entry name" value="NAD(P)-bd_dom_sf"/>
</dbReference>
<dbReference type="NCBIfam" id="TIGR00465">
    <property type="entry name" value="ilvC"/>
    <property type="match status" value="1"/>
</dbReference>
<dbReference type="NCBIfam" id="NF004017">
    <property type="entry name" value="PRK05479.1"/>
    <property type="match status" value="1"/>
</dbReference>
<dbReference type="NCBIfam" id="NF009940">
    <property type="entry name" value="PRK13403.1"/>
    <property type="match status" value="1"/>
</dbReference>
<dbReference type="PANTHER" id="PTHR21371">
    <property type="entry name" value="KETOL-ACID REDUCTOISOMERASE, MITOCHONDRIAL"/>
    <property type="match status" value="1"/>
</dbReference>
<dbReference type="PANTHER" id="PTHR21371:SF1">
    <property type="entry name" value="KETOL-ACID REDUCTOISOMERASE, MITOCHONDRIAL"/>
    <property type="match status" value="1"/>
</dbReference>
<dbReference type="Pfam" id="PF01450">
    <property type="entry name" value="KARI_C"/>
    <property type="match status" value="1"/>
</dbReference>
<dbReference type="Pfam" id="PF07991">
    <property type="entry name" value="KARI_N"/>
    <property type="match status" value="1"/>
</dbReference>
<dbReference type="PIRSF" id="PIRSF000116">
    <property type="entry name" value="IlvC_gammaproteo"/>
    <property type="match status" value="1"/>
</dbReference>
<dbReference type="SUPFAM" id="SSF48179">
    <property type="entry name" value="6-phosphogluconate dehydrogenase C-terminal domain-like"/>
    <property type="match status" value="1"/>
</dbReference>
<dbReference type="SUPFAM" id="SSF51735">
    <property type="entry name" value="NAD(P)-binding Rossmann-fold domains"/>
    <property type="match status" value="1"/>
</dbReference>
<dbReference type="PROSITE" id="PS51851">
    <property type="entry name" value="KARI_C"/>
    <property type="match status" value="1"/>
</dbReference>
<dbReference type="PROSITE" id="PS51850">
    <property type="entry name" value="KARI_N"/>
    <property type="match status" value="1"/>
</dbReference>
<gene>
    <name evidence="1" type="primary">ilvC</name>
    <name type="ordered locus">SYNW1650</name>
</gene>
<name>ILVC_PARMW</name>
<protein>
    <recommendedName>
        <fullName evidence="1">Ketol-acid reductoisomerase (NADP(+))</fullName>
        <shortName evidence="1">KARI</shortName>
        <ecNumber evidence="1">1.1.1.86</ecNumber>
    </recommendedName>
    <alternativeName>
        <fullName evidence="1">Acetohydroxy-acid isomeroreductase</fullName>
        <shortName evidence="1">AHIR</shortName>
    </alternativeName>
    <alternativeName>
        <fullName evidence="1">Alpha-keto-beta-hydroxylacyl reductoisomerase</fullName>
    </alternativeName>
    <alternativeName>
        <fullName evidence="1">Ketol-acid reductoisomerase type 1</fullName>
    </alternativeName>
    <alternativeName>
        <fullName evidence="1">Ketol-acid reductoisomerase type I</fullName>
    </alternativeName>
</protein>
<keyword id="KW-0028">Amino-acid biosynthesis</keyword>
<keyword id="KW-0100">Branched-chain amino acid biosynthesis</keyword>
<keyword id="KW-0460">Magnesium</keyword>
<keyword id="KW-0479">Metal-binding</keyword>
<keyword id="KW-0521">NADP</keyword>
<keyword id="KW-0560">Oxidoreductase</keyword>
<sequence>MAQLFYDSDADLGLLNSKTVAIIGYGSQGHAHALNLKDSGVNVVVGLYDGSRSADKAKADGLEVLSVADASAKADWVMVLLPDEFQKDVYEKEIAPHLTSGKVLSFAHGFNIRFELIKPPTDVDVVMIAPKGPGHTVRWEYQNGQGVPALFAIEQDASGQARGLAMAYAKGIGGTRAGILETNFKEETETDLFGEQAVLCGGLSELVKAGFETLVEAGYQPELAYFECLHEVKLIVDLMVKGGLTSMRDSISNTAEYGDYVSGPRLITADTKAEMKRVLADIQDGTFAKNFVAECEAGKPEMKKVRDRDSQHPIEKVGKGLRSMFSWLKDA</sequence>
<evidence type="ECO:0000255" key="1">
    <source>
        <dbReference type="HAMAP-Rule" id="MF_00435"/>
    </source>
</evidence>
<evidence type="ECO:0000255" key="2">
    <source>
        <dbReference type="PROSITE-ProRule" id="PRU01197"/>
    </source>
</evidence>
<evidence type="ECO:0000255" key="3">
    <source>
        <dbReference type="PROSITE-ProRule" id="PRU01198"/>
    </source>
</evidence>
<proteinExistence type="inferred from homology"/>
<reference key="1">
    <citation type="journal article" date="2003" name="Nature">
        <title>The genome of a motile marine Synechococcus.</title>
        <authorList>
            <person name="Palenik B."/>
            <person name="Brahamsha B."/>
            <person name="Larimer F.W."/>
            <person name="Land M.L."/>
            <person name="Hauser L."/>
            <person name="Chain P."/>
            <person name="Lamerdin J.E."/>
            <person name="Regala W."/>
            <person name="Allen E.E."/>
            <person name="McCarren J."/>
            <person name="Paulsen I.T."/>
            <person name="Dufresne A."/>
            <person name="Partensky F."/>
            <person name="Webb E.A."/>
            <person name="Waterbury J."/>
        </authorList>
    </citation>
    <scope>NUCLEOTIDE SEQUENCE [LARGE SCALE GENOMIC DNA]</scope>
    <source>
        <strain>WH8102</strain>
    </source>
</reference>
<accession>Q7U5Q1</accession>
<organism>
    <name type="scientific">Parasynechococcus marenigrum (strain WH8102)</name>
    <dbReference type="NCBI Taxonomy" id="84588"/>
    <lineage>
        <taxon>Bacteria</taxon>
        <taxon>Bacillati</taxon>
        <taxon>Cyanobacteriota</taxon>
        <taxon>Cyanophyceae</taxon>
        <taxon>Synechococcales</taxon>
        <taxon>Prochlorococcaceae</taxon>
        <taxon>Parasynechococcus</taxon>
        <taxon>Parasynechococcus marenigrum</taxon>
    </lineage>
</organism>
<feature type="chain" id="PRO_0000151371" description="Ketol-acid reductoisomerase (NADP(+))">
    <location>
        <begin position="1"/>
        <end position="331"/>
    </location>
</feature>
<feature type="domain" description="KARI N-terminal Rossmann" evidence="2">
    <location>
        <begin position="2"/>
        <end position="182"/>
    </location>
</feature>
<feature type="domain" description="KARI C-terminal knotted" evidence="3">
    <location>
        <begin position="183"/>
        <end position="328"/>
    </location>
</feature>
<feature type="active site" evidence="1">
    <location>
        <position position="108"/>
    </location>
</feature>
<feature type="binding site" evidence="1">
    <location>
        <begin position="25"/>
        <end position="28"/>
    </location>
    <ligand>
        <name>NADP(+)</name>
        <dbReference type="ChEBI" id="CHEBI:58349"/>
    </ligand>
</feature>
<feature type="binding site" evidence="1">
    <location>
        <position position="51"/>
    </location>
    <ligand>
        <name>NADP(+)</name>
        <dbReference type="ChEBI" id="CHEBI:58349"/>
    </ligand>
</feature>
<feature type="binding site" evidence="1">
    <location>
        <position position="53"/>
    </location>
    <ligand>
        <name>NADP(+)</name>
        <dbReference type="ChEBI" id="CHEBI:58349"/>
    </ligand>
</feature>
<feature type="binding site" evidence="1">
    <location>
        <begin position="83"/>
        <end position="86"/>
    </location>
    <ligand>
        <name>NADP(+)</name>
        <dbReference type="ChEBI" id="CHEBI:58349"/>
    </ligand>
</feature>
<feature type="binding site" evidence="1">
    <location>
        <position position="134"/>
    </location>
    <ligand>
        <name>NADP(+)</name>
        <dbReference type="ChEBI" id="CHEBI:58349"/>
    </ligand>
</feature>
<feature type="binding site" evidence="1">
    <location>
        <position position="191"/>
    </location>
    <ligand>
        <name>Mg(2+)</name>
        <dbReference type="ChEBI" id="CHEBI:18420"/>
        <label>1</label>
    </ligand>
</feature>
<feature type="binding site" evidence="1">
    <location>
        <position position="191"/>
    </location>
    <ligand>
        <name>Mg(2+)</name>
        <dbReference type="ChEBI" id="CHEBI:18420"/>
        <label>2</label>
    </ligand>
</feature>
<feature type="binding site" evidence="1">
    <location>
        <position position="195"/>
    </location>
    <ligand>
        <name>Mg(2+)</name>
        <dbReference type="ChEBI" id="CHEBI:18420"/>
        <label>1</label>
    </ligand>
</feature>
<feature type="binding site" evidence="1">
    <location>
        <position position="227"/>
    </location>
    <ligand>
        <name>Mg(2+)</name>
        <dbReference type="ChEBI" id="CHEBI:18420"/>
        <label>2</label>
    </ligand>
</feature>
<feature type="binding site" evidence="1">
    <location>
        <position position="231"/>
    </location>
    <ligand>
        <name>Mg(2+)</name>
        <dbReference type="ChEBI" id="CHEBI:18420"/>
        <label>2</label>
    </ligand>
</feature>
<feature type="binding site" evidence="1">
    <location>
        <position position="252"/>
    </location>
    <ligand>
        <name>substrate</name>
    </ligand>
</feature>